<keyword id="KW-0997">Cell inner membrane</keyword>
<keyword id="KW-1003">Cell membrane</keyword>
<keyword id="KW-0472">Membrane</keyword>
<keyword id="KW-0653">Protein transport</keyword>
<keyword id="KW-1185">Reference proteome</keyword>
<keyword id="KW-0811">Translocation</keyword>
<keyword id="KW-0812">Transmembrane</keyword>
<keyword id="KW-1133">Transmembrane helix</keyword>
<keyword id="KW-0813">Transport</keyword>
<gene>
    <name evidence="1" type="primary">tatA</name>
    <name type="ordered locus">HI_0187</name>
</gene>
<comment type="function">
    <text evidence="1">Part of the twin-arginine translocation (Tat) system that transports large folded proteins containing a characteristic twin-arginine motif in their signal peptide across membranes. TatA could form the protein-conducting channel of the Tat system.</text>
</comment>
<comment type="subunit">
    <text evidence="1">The Tat system comprises two distinct complexes: a TatABC complex, containing multiple copies of TatA, TatB and TatC subunits, and a separate TatA complex, containing only TatA subunits. Substrates initially bind to the TatABC complex, which probably triggers association of the separate TatA complex to form the active translocon.</text>
</comment>
<comment type="subcellular location">
    <subcellularLocation>
        <location evidence="1">Cell inner membrane</location>
        <topology evidence="1">Single-pass membrane protein</topology>
    </subcellularLocation>
</comment>
<comment type="similarity">
    <text evidence="1">Belongs to the TatA/E family.</text>
</comment>
<proteinExistence type="inferred from homology"/>
<dbReference type="EMBL" id="L42023">
    <property type="status" value="NOT_ANNOTATED_CDS"/>
    <property type="molecule type" value="Genomic_DNA"/>
</dbReference>
<dbReference type="RefSeq" id="NP_438355.1">
    <property type="nucleotide sequence ID" value="NC_000907.1"/>
</dbReference>
<dbReference type="SMR" id="P57046"/>
<dbReference type="PATRIC" id="fig|71421.8.peg.191"/>
<dbReference type="OrthoDB" id="7066617at2"/>
<dbReference type="PhylomeDB" id="P57046"/>
<dbReference type="BioCyc" id="HINF71421:G1GJ1-197-MONOMER"/>
<dbReference type="Proteomes" id="UP000000579">
    <property type="component" value="Chromosome"/>
</dbReference>
<dbReference type="GO" id="GO:0033281">
    <property type="term" value="C:TAT protein transport complex"/>
    <property type="evidence" value="ECO:0007669"/>
    <property type="project" value="UniProtKB-UniRule"/>
</dbReference>
<dbReference type="GO" id="GO:0008320">
    <property type="term" value="F:protein transmembrane transporter activity"/>
    <property type="evidence" value="ECO:0007669"/>
    <property type="project" value="UniProtKB-UniRule"/>
</dbReference>
<dbReference type="GO" id="GO:0043953">
    <property type="term" value="P:protein transport by the Tat complex"/>
    <property type="evidence" value="ECO:0007669"/>
    <property type="project" value="UniProtKB-UniRule"/>
</dbReference>
<dbReference type="Gene3D" id="1.20.5.3310">
    <property type="match status" value="1"/>
</dbReference>
<dbReference type="HAMAP" id="MF_00236">
    <property type="entry name" value="TatA_E"/>
    <property type="match status" value="1"/>
</dbReference>
<dbReference type="InterPro" id="IPR003369">
    <property type="entry name" value="TatA/B/E"/>
</dbReference>
<dbReference type="InterPro" id="IPR006312">
    <property type="entry name" value="TatA/E"/>
</dbReference>
<dbReference type="NCBIfam" id="TIGR01411">
    <property type="entry name" value="tatAE"/>
    <property type="match status" value="1"/>
</dbReference>
<dbReference type="PANTHER" id="PTHR42982">
    <property type="entry name" value="SEC-INDEPENDENT PROTEIN TRANSLOCASE PROTEIN TATA"/>
    <property type="match status" value="1"/>
</dbReference>
<dbReference type="PANTHER" id="PTHR42982:SF1">
    <property type="entry name" value="SEC-INDEPENDENT PROTEIN TRANSLOCASE PROTEIN TATA"/>
    <property type="match status" value="1"/>
</dbReference>
<dbReference type="Pfam" id="PF02416">
    <property type="entry name" value="TatA_B_E"/>
    <property type="match status" value="1"/>
</dbReference>
<accession>P57046</accession>
<accession>P44559</accession>
<organism>
    <name type="scientific">Haemophilus influenzae (strain ATCC 51907 / DSM 11121 / KW20 / Rd)</name>
    <dbReference type="NCBI Taxonomy" id="71421"/>
    <lineage>
        <taxon>Bacteria</taxon>
        <taxon>Pseudomonadati</taxon>
        <taxon>Pseudomonadota</taxon>
        <taxon>Gammaproteobacteria</taxon>
        <taxon>Pasteurellales</taxon>
        <taxon>Pasteurellaceae</taxon>
        <taxon>Haemophilus</taxon>
    </lineage>
</organism>
<feature type="chain" id="PRO_0000097938" description="Sec-independent protein translocase protein TatA">
    <location>
        <begin position="1"/>
        <end position="89"/>
    </location>
</feature>
<feature type="transmembrane region" description="Helical" evidence="1">
    <location>
        <begin position="1"/>
        <end position="21"/>
    </location>
</feature>
<sequence>MFGLSPAQLIILLVVILLIFGTKKLRNAGSDLGAAVKGFKKAMKEDEKVKDAEFKSIDNETASAKKGKYKRERNRLNPCLILVFQNLFY</sequence>
<protein>
    <recommendedName>
        <fullName evidence="1">Sec-independent protein translocase protein TatA</fullName>
    </recommendedName>
</protein>
<evidence type="ECO:0000255" key="1">
    <source>
        <dbReference type="HAMAP-Rule" id="MF_00236"/>
    </source>
</evidence>
<reference key="1">
    <citation type="journal article" date="1995" name="Science">
        <title>Whole-genome random sequencing and assembly of Haemophilus influenzae Rd.</title>
        <authorList>
            <person name="Fleischmann R.D."/>
            <person name="Adams M.D."/>
            <person name="White O."/>
            <person name="Clayton R.A."/>
            <person name="Kirkness E.F."/>
            <person name="Kerlavage A.R."/>
            <person name="Bult C.J."/>
            <person name="Tomb J.-F."/>
            <person name="Dougherty B.A."/>
            <person name="Merrick J.M."/>
            <person name="McKenney K."/>
            <person name="Sutton G.G."/>
            <person name="FitzHugh W."/>
            <person name="Fields C.A."/>
            <person name="Gocayne J.D."/>
            <person name="Scott J.D."/>
            <person name="Shirley R."/>
            <person name="Liu L.-I."/>
            <person name="Glodek A."/>
            <person name="Kelley J.M."/>
            <person name="Weidman J.F."/>
            <person name="Phillips C.A."/>
            <person name="Spriggs T."/>
            <person name="Hedblom E."/>
            <person name="Cotton M.D."/>
            <person name="Utterback T.R."/>
            <person name="Hanna M.C."/>
            <person name="Nguyen D.T."/>
            <person name="Saudek D.M."/>
            <person name="Brandon R.C."/>
            <person name="Fine L.D."/>
            <person name="Fritchman J.L."/>
            <person name="Fuhrmann J.L."/>
            <person name="Geoghagen N.S.M."/>
            <person name="Gnehm C.L."/>
            <person name="McDonald L.A."/>
            <person name="Small K.V."/>
            <person name="Fraser C.M."/>
            <person name="Smith H.O."/>
            <person name="Venter J.C."/>
        </authorList>
    </citation>
    <scope>NUCLEOTIDE SEQUENCE [LARGE SCALE GENOMIC DNA]</scope>
    <source>
        <strain>ATCC 51907 / DSM 11121 / KW20 / Rd</strain>
    </source>
</reference>
<name>TATA_HAEIN</name>